<proteinExistence type="inferred from homology"/>
<sequence length="364" mass="39246">MPRPILATIHRPALAHNLARARSAAPDARVWAVVKANAYGHGIEHVFDGLRSADGFALLDLAEARRLRALDWRGPILLLEGCFEARDLELCSRLSLWHVIHCNEQIDMLAAHKTQVPHRVFLKMNSGMNRLGLRPERFRAAWTRLNALPQVDEISLMTHFSDADGPKGIAAQLRAFDAVTHDLPGERSLSNSAGVLRHGDELAARSDWVRPGIVVYGSAPDFPEHSAADWGLQPTMTLSSRIIGVQELAAGDTVGYGSSFTADGPLRIGVVACGYADGYPRHCSTGTPVLVNGVRTRMVGRVSMDMITVDLTPVPDAGMGAEVTLWGRSSGGAVLPIDEVAQTAGTVGYELMCAVAPRVPVMTE</sequence>
<feature type="chain" id="PRO_1000066024" description="Alanine racemase">
    <location>
        <begin position="1"/>
        <end position="364"/>
    </location>
</feature>
<feature type="active site" description="Proton acceptor; specific for D-alanine" evidence="1">
    <location>
        <position position="35"/>
    </location>
</feature>
<feature type="active site" description="Proton acceptor; specific for L-alanine" evidence="1">
    <location>
        <position position="256"/>
    </location>
</feature>
<feature type="binding site" evidence="1">
    <location>
        <position position="130"/>
    </location>
    <ligand>
        <name>substrate</name>
    </ligand>
</feature>
<feature type="binding site" evidence="1">
    <location>
        <position position="304"/>
    </location>
    <ligand>
        <name>substrate</name>
    </ligand>
</feature>
<feature type="modified residue" description="N6-(pyridoxal phosphate)lysine" evidence="1">
    <location>
        <position position="35"/>
    </location>
</feature>
<name>ALR_POLSJ</name>
<evidence type="ECO:0000255" key="1">
    <source>
        <dbReference type="HAMAP-Rule" id="MF_01201"/>
    </source>
</evidence>
<gene>
    <name type="primary">alr</name>
    <name type="ordered locus">Bpro_0193</name>
</gene>
<comment type="function">
    <text evidence="1">Catalyzes the interconversion of L-alanine and D-alanine. May also act on other amino acids.</text>
</comment>
<comment type="catalytic activity">
    <reaction evidence="1">
        <text>L-alanine = D-alanine</text>
        <dbReference type="Rhea" id="RHEA:20249"/>
        <dbReference type="ChEBI" id="CHEBI:57416"/>
        <dbReference type="ChEBI" id="CHEBI:57972"/>
        <dbReference type="EC" id="5.1.1.1"/>
    </reaction>
</comment>
<comment type="cofactor">
    <cofactor evidence="1">
        <name>pyridoxal 5'-phosphate</name>
        <dbReference type="ChEBI" id="CHEBI:597326"/>
    </cofactor>
</comment>
<comment type="pathway">
    <text evidence="1">Amino-acid biosynthesis; D-alanine biosynthesis; D-alanine from L-alanine: step 1/1.</text>
</comment>
<comment type="similarity">
    <text evidence="1">Belongs to the alanine racemase family.</text>
</comment>
<dbReference type="EC" id="5.1.1.1" evidence="1"/>
<dbReference type="EMBL" id="CP000316">
    <property type="protein sequence ID" value="ABE42158.1"/>
    <property type="molecule type" value="Genomic_DNA"/>
</dbReference>
<dbReference type="RefSeq" id="WP_011481167.1">
    <property type="nucleotide sequence ID" value="NC_007948.1"/>
</dbReference>
<dbReference type="SMR" id="Q12H34"/>
<dbReference type="STRING" id="296591.Bpro_0193"/>
<dbReference type="KEGG" id="pol:Bpro_0193"/>
<dbReference type="eggNOG" id="COG0787">
    <property type="taxonomic scope" value="Bacteria"/>
</dbReference>
<dbReference type="HOGENOM" id="CLU_028393_1_0_4"/>
<dbReference type="OrthoDB" id="9813814at2"/>
<dbReference type="UniPathway" id="UPA00042">
    <property type="reaction ID" value="UER00497"/>
</dbReference>
<dbReference type="Proteomes" id="UP000001983">
    <property type="component" value="Chromosome"/>
</dbReference>
<dbReference type="GO" id="GO:0005829">
    <property type="term" value="C:cytosol"/>
    <property type="evidence" value="ECO:0007669"/>
    <property type="project" value="TreeGrafter"/>
</dbReference>
<dbReference type="GO" id="GO:0008784">
    <property type="term" value="F:alanine racemase activity"/>
    <property type="evidence" value="ECO:0007669"/>
    <property type="project" value="UniProtKB-UniRule"/>
</dbReference>
<dbReference type="GO" id="GO:0030170">
    <property type="term" value="F:pyridoxal phosphate binding"/>
    <property type="evidence" value="ECO:0007669"/>
    <property type="project" value="UniProtKB-UniRule"/>
</dbReference>
<dbReference type="GO" id="GO:0030632">
    <property type="term" value="P:D-alanine biosynthetic process"/>
    <property type="evidence" value="ECO:0007669"/>
    <property type="project" value="UniProtKB-UniRule"/>
</dbReference>
<dbReference type="CDD" id="cd06827">
    <property type="entry name" value="PLPDE_III_AR_proteobact"/>
    <property type="match status" value="1"/>
</dbReference>
<dbReference type="FunFam" id="3.20.20.10:FF:000002">
    <property type="entry name" value="Alanine racemase"/>
    <property type="match status" value="1"/>
</dbReference>
<dbReference type="Gene3D" id="3.20.20.10">
    <property type="entry name" value="Alanine racemase"/>
    <property type="match status" value="1"/>
</dbReference>
<dbReference type="Gene3D" id="2.40.37.10">
    <property type="entry name" value="Lyase, Ornithine Decarboxylase, Chain A, domain 1"/>
    <property type="match status" value="1"/>
</dbReference>
<dbReference type="HAMAP" id="MF_01201">
    <property type="entry name" value="Ala_racemase"/>
    <property type="match status" value="1"/>
</dbReference>
<dbReference type="InterPro" id="IPR000821">
    <property type="entry name" value="Ala_racemase"/>
</dbReference>
<dbReference type="InterPro" id="IPR009006">
    <property type="entry name" value="Ala_racemase/Decarboxylase_C"/>
</dbReference>
<dbReference type="InterPro" id="IPR011079">
    <property type="entry name" value="Ala_racemase_C"/>
</dbReference>
<dbReference type="InterPro" id="IPR001608">
    <property type="entry name" value="Ala_racemase_N"/>
</dbReference>
<dbReference type="InterPro" id="IPR020622">
    <property type="entry name" value="Ala_racemase_pyridoxalP-BS"/>
</dbReference>
<dbReference type="InterPro" id="IPR029066">
    <property type="entry name" value="PLP-binding_barrel"/>
</dbReference>
<dbReference type="NCBIfam" id="TIGR00492">
    <property type="entry name" value="alr"/>
    <property type="match status" value="1"/>
</dbReference>
<dbReference type="PANTHER" id="PTHR30511">
    <property type="entry name" value="ALANINE RACEMASE"/>
    <property type="match status" value="1"/>
</dbReference>
<dbReference type="PANTHER" id="PTHR30511:SF0">
    <property type="entry name" value="ALANINE RACEMASE, CATABOLIC-RELATED"/>
    <property type="match status" value="1"/>
</dbReference>
<dbReference type="Pfam" id="PF00842">
    <property type="entry name" value="Ala_racemase_C"/>
    <property type="match status" value="1"/>
</dbReference>
<dbReference type="Pfam" id="PF01168">
    <property type="entry name" value="Ala_racemase_N"/>
    <property type="match status" value="1"/>
</dbReference>
<dbReference type="PRINTS" id="PR00992">
    <property type="entry name" value="ALARACEMASE"/>
</dbReference>
<dbReference type="SMART" id="SM01005">
    <property type="entry name" value="Ala_racemase_C"/>
    <property type="match status" value="1"/>
</dbReference>
<dbReference type="SUPFAM" id="SSF50621">
    <property type="entry name" value="Alanine racemase C-terminal domain-like"/>
    <property type="match status" value="1"/>
</dbReference>
<dbReference type="SUPFAM" id="SSF51419">
    <property type="entry name" value="PLP-binding barrel"/>
    <property type="match status" value="1"/>
</dbReference>
<dbReference type="PROSITE" id="PS00395">
    <property type="entry name" value="ALANINE_RACEMASE"/>
    <property type="match status" value="1"/>
</dbReference>
<reference key="1">
    <citation type="journal article" date="2008" name="Appl. Environ. Microbiol.">
        <title>The genome of Polaromonas sp. strain JS666: insights into the evolution of a hydrocarbon- and xenobiotic-degrading bacterium, and features of relevance to biotechnology.</title>
        <authorList>
            <person name="Mattes T.E."/>
            <person name="Alexander A.K."/>
            <person name="Richardson P.M."/>
            <person name="Munk A.C."/>
            <person name="Han C.S."/>
            <person name="Stothard P."/>
            <person name="Coleman N.V."/>
        </authorList>
    </citation>
    <scope>NUCLEOTIDE SEQUENCE [LARGE SCALE GENOMIC DNA]</scope>
    <source>
        <strain>JS666 / ATCC BAA-500</strain>
    </source>
</reference>
<keyword id="KW-0413">Isomerase</keyword>
<keyword id="KW-0663">Pyridoxal phosphate</keyword>
<keyword id="KW-1185">Reference proteome</keyword>
<accession>Q12H34</accession>
<protein>
    <recommendedName>
        <fullName evidence="1">Alanine racemase</fullName>
        <ecNumber evidence="1">5.1.1.1</ecNumber>
    </recommendedName>
</protein>
<organism>
    <name type="scientific">Polaromonas sp. (strain JS666 / ATCC BAA-500)</name>
    <dbReference type="NCBI Taxonomy" id="296591"/>
    <lineage>
        <taxon>Bacteria</taxon>
        <taxon>Pseudomonadati</taxon>
        <taxon>Pseudomonadota</taxon>
        <taxon>Betaproteobacteria</taxon>
        <taxon>Burkholderiales</taxon>
        <taxon>Comamonadaceae</taxon>
        <taxon>Polaromonas</taxon>
    </lineage>
</organism>